<sequence length="143" mass="16409">MSRHYEVVFLVHPDQSEQVPAMIERYKSLIEGGNGTIHRLEDWGRRQLAYPIQNLVKAHYVLLNIEVDQAVLSELVESFRFNDAVLRHLVVKRDGPDTEQSLIMKSKDEKGDKHERSERRRRDDEEGDVPAATDTDGDNAEAA</sequence>
<keyword id="KW-0687">Ribonucleoprotein</keyword>
<keyword id="KW-0689">Ribosomal protein</keyword>
<keyword id="KW-0694">RNA-binding</keyword>
<keyword id="KW-0699">rRNA-binding</keyword>
<proteinExistence type="inferred from homology"/>
<reference key="1">
    <citation type="journal article" date="2008" name="BMC Genomics">
        <title>Genome sequence and rapid evolution of the rice pathogen Xanthomonas oryzae pv. oryzae PXO99A.</title>
        <authorList>
            <person name="Salzberg S.L."/>
            <person name="Sommer D.D."/>
            <person name="Schatz M.C."/>
            <person name="Phillippy A.M."/>
            <person name="Rabinowicz P.D."/>
            <person name="Tsuge S."/>
            <person name="Furutani A."/>
            <person name="Ochiai H."/>
            <person name="Delcher A.L."/>
            <person name="Kelley D."/>
            <person name="Madupu R."/>
            <person name="Puiu D."/>
            <person name="Radune D."/>
            <person name="Shumway M."/>
            <person name="Trapnell C."/>
            <person name="Aparna G."/>
            <person name="Jha G."/>
            <person name="Pandey A."/>
            <person name="Patil P.B."/>
            <person name="Ishihara H."/>
            <person name="Meyer D.F."/>
            <person name="Szurek B."/>
            <person name="Verdier V."/>
            <person name="Koebnik R."/>
            <person name="Dow J.M."/>
            <person name="Ryan R.P."/>
            <person name="Hirata H."/>
            <person name="Tsuyumu S."/>
            <person name="Won Lee S."/>
            <person name="Seo Y.-S."/>
            <person name="Sriariyanum M."/>
            <person name="Ronald P.C."/>
            <person name="Sonti R.V."/>
            <person name="Van Sluys M.-A."/>
            <person name="Leach J.E."/>
            <person name="White F.F."/>
            <person name="Bogdanove A.J."/>
        </authorList>
    </citation>
    <scope>NUCLEOTIDE SEQUENCE [LARGE SCALE GENOMIC DNA]</scope>
    <source>
        <strain>PXO99A</strain>
    </source>
</reference>
<organism>
    <name type="scientific">Xanthomonas oryzae pv. oryzae (strain PXO99A)</name>
    <dbReference type="NCBI Taxonomy" id="360094"/>
    <lineage>
        <taxon>Bacteria</taxon>
        <taxon>Pseudomonadati</taxon>
        <taxon>Pseudomonadota</taxon>
        <taxon>Gammaproteobacteria</taxon>
        <taxon>Lysobacterales</taxon>
        <taxon>Lysobacteraceae</taxon>
        <taxon>Xanthomonas</taxon>
    </lineage>
</organism>
<accession>B2SIV0</accession>
<dbReference type="EMBL" id="CP000967">
    <property type="protein sequence ID" value="ACD58745.1"/>
    <property type="molecule type" value="Genomic_DNA"/>
</dbReference>
<dbReference type="RefSeq" id="WP_011259077.1">
    <property type="nucleotide sequence ID" value="NC_010717.2"/>
</dbReference>
<dbReference type="SMR" id="B2SIV0"/>
<dbReference type="KEGG" id="xop:PXO_00746"/>
<dbReference type="eggNOG" id="COG0360">
    <property type="taxonomic scope" value="Bacteria"/>
</dbReference>
<dbReference type="HOGENOM" id="CLU_113441_6_0_6"/>
<dbReference type="Proteomes" id="UP000001740">
    <property type="component" value="Chromosome"/>
</dbReference>
<dbReference type="GO" id="GO:0022627">
    <property type="term" value="C:cytosolic small ribosomal subunit"/>
    <property type="evidence" value="ECO:0007669"/>
    <property type="project" value="TreeGrafter"/>
</dbReference>
<dbReference type="GO" id="GO:0070181">
    <property type="term" value="F:small ribosomal subunit rRNA binding"/>
    <property type="evidence" value="ECO:0007669"/>
    <property type="project" value="TreeGrafter"/>
</dbReference>
<dbReference type="GO" id="GO:0003735">
    <property type="term" value="F:structural constituent of ribosome"/>
    <property type="evidence" value="ECO:0007669"/>
    <property type="project" value="InterPro"/>
</dbReference>
<dbReference type="GO" id="GO:0006412">
    <property type="term" value="P:translation"/>
    <property type="evidence" value="ECO:0007669"/>
    <property type="project" value="UniProtKB-UniRule"/>
</dbReference>
<dbReference type="CDD" id="cd00473">
    <property type="entry name" value="bS6"/>
    <property type="match status" value="1"/>
</dbReference>
<dbReference type="FunFam" id="3.30.70.60:FF:000003">
    <property type="entry name" value="30S ribosomal protein S6"/>
    <property type="match status" value="1"/>
</dbReference>
<dbReference type="Gene3D" id="3.30.70.60">
    <property type="match status" value="1"/>
</dbReference>
<dbReference type="HAMAP" id="MF_00360">
    <property type="entry name" value="Ribosomal_bS6"/>
    <property type="match status" value="1"/>
</dbReference>
<dbReference type="InterPro" id="IPR000529">
    <property type="entry name" value="Ribosomal_bS6"/>
</dbReference>
<dbReference type="InterPro" id="IPR035980">
    <property type="entry name" value="Ribosomal_bS6_sf"/>
</dbReference>
<dbReference type="InterPro" id="IPR020814">
    <property type="entry name" value="Ribosomal_S6_plastid/chlpt"/>
</dbReference>
<dbReference type="InterPro" id="IPR014717">
    <property type="entry name" value="Transl_elong_EF1B/ribsomal_bS6"/>
</dbReference>
<dbReference type="NCBIfam" id="TIGR00166">
    <property type="entry name" value="S6"/>
    <property type="match status" value="1"/>
</dbReference>
<dbReference type="PANTHER" id="PTHR21011">
    <property type="entry name" value="MITOCHONDRIAL 28S RIBOSOMAL PROTEIN S6"/>
    <property type="match status" value="1"/>
</dbReference>
<dbReference type="PANTHER" id="PTHR21011:SF1">
    <property type="entry name" value="SMALL RIBOSOMAL SUBUNIT PROTEIN BS6M"/>
    <property type="match status" value="1"/>
</dbReference>
<dbReference type="Pfam" id="PF01250">
    <property type="entry name" value="Ribosomal_S6"/>
    <property type="match status" value="1"/>
</dbReference>
<dbReference type="SUPFAM" id="SSF54995">
    <property type="entry name" value="Ribosomal protein S6"/>
    <property type="match status" value="1"/>
</dbReference>
<gene>
    <name evidence="1" type="primary">rpsF</name>
    <name type="ordered locus">PXO_00746</name>
</gene>
<comment type="function">
    <text evidence="1">Binds together with bS18 to 16S ribosomal RNA.</text>
</comment>
<comment type="similarity">
    <text evidence="1">Belongs to the bacterial ribosomal protein bS6 family.</text>
</comment>
<protein>
    <recommendedName>
        <fullName evidence="1">Small ribosomal subunit protein bS6</fullName>
    </recommendedName>
    <alternativeName>
        <fullName evidence="3">30S ribosomal protein S6</fullName>
    </alternativeName>
</protein>
<feature type="chain" id="PRO_1000120823" description="Small ribosomal subunit protein bS6">
    <location>
        <begin position="1"/>
        <end position="143"/>
    </location>
</feature>
<feature type="region of interest" description="Disordered" evidence="2">
    <location>
        <begin position="97"/>
        <end position="143"/>
    </location>
</feature>
<feature type="compositionally biased region" description="Basic and acidic residues" evidence="2">
    <location>
        <begin position="105"/>
        <end position="124"/>
    </location>
</feature>
<name>RS6_XANOP</name>
<evidence type="ECO:0000255" key="1">
    <source>
        <dbReference type="HAMAP-Rule" id="MF_00360"/>
    </source>
</evidence>
<evidence type="ECO:0000256" key="2">
    <source>
        <dbReference type="SAM" id="MobiDB-lite"/>
    </source>
</evidence>
<evidence type="ECO:0000305" key="3"/>